<dbReference type="EC" id="4.2.1.96" evidence="1"/>
<dbReference type="EMBL" id="CP000301">
    <property type="protein sequence ID" value="ABD88075.1"/>
    <property type="molecule type" value="Genomic_DNA"/>
</dbReference>
<dbReference type="SMR" id="Q214W1"/>
<dbReference type="STRING" id="316056.RPC_2524"/>
<dbReference type="KEGG" id="rpc:RPC_2524"/>
<dbReference type="eggNOG" id="COG2154">
    <property type="taxonomic scope" value="Bacteria"/>
</dbReference>
<dbReference type="HOGENOM" id="CLU_081974_3_2_5"/>
<dbReference type="OrthoDB" id="9794987at2"/>
<dbReference type="GO" id="GO:0008124">
    <property type="term" value="F:4-alpha-hydroxytetrahydrobiopterin dehydratase activity"/>
    <property type="evidence" value="ECO:0007669"/>
    <property type="project" value="UniProtKB-UniRule"/>
</dbReference>
<dbReference type="GO" id="GO:0006729">
    <property type="term" value="P:tetrahydrobiopterin biosynthetic process"/>
    <property type="evidence" value="ECO:0007669"/>
    <property type="project" value="InterPro"/>
</dbReference>
<dbReference type="CDD" id="cd00914">
    <property type="entry name" value="PCD_DCoH_subfamily_b"/>
    <property type="match status" value="1"/>
</dbReference>
<dbReference type="Gene3D" id="3.30.1360.20">
    <property type="entry name" value="Transcriptional coactivator/pterin dehydratase"/>
    <property type="match status" value="1"/>
</dbReference>
<dbReference type="HAMAP" id="MF_00434">
    <property type="entry name" value="Pterin_4_alpha"/>
    <property type="match status" value="1"/>
</dbReference>
<dbReference type="InterPro" id="IPR036428">
    <property type="entry name" value="PCD_sf"/>
</dbReference>
<dbReference type="InterPro" id="IPR001533">
    <property type="entry name" value="Pterin_deHydtase"/>
</dbReference>
<dbReference type="NCBIfam" id="NF002017">
    <property type="entry name" value="PRK00823.1-2"/>
    <property type="match status" value="1"/>
</dbReference>
<dbReference type="NCBIfam" id="NF002018">
    <property type="entry name" value="PRK00823.1-3"/>
    <property type="match status" value="1"/>
</dbReference>
<dbReference type="NCBIfam" id="NF002020">
    <property type="entry name" value="PRK00823.1-5"/>
    <property type="match status" value="1"/>
</dbReference>
<dbReference type="PANTHER" id="PTHR12599">
    <property type="entry name" value="PTERIN-4-ALPHA-CARBINOLAMINE DEHYDRATASE"/>
    <property type="match status" value="1"/>
</dbReference>
<dbReference type="PANTHER" id="PTHR12599:SF0">
    <property type="entry name" value="PTERIN-4-ALPHA-CARBINOLAMINE DEHYDRATASE"/>
    <property type="match status" value="1"/>
</dbReference>
<dbReference type="Pfam" id="PF01329">
    <property type="entry name" value="Pterin_4a"/>
    <property type="match status" value="1"/>
</dbReference>
<dbReference type="SUPFAM" id="SSF55248">
    <property type="entry name" value="PCD-like"/>
    <property type="match status" value="1"/>
</dbReference>
<feature type="chain" id="PRO_1000050445" description="Putative pterin-4-alpha-carbinolamine dehydratase">
    <location>
        <begin position="1"/>
        <end position="101"/>
    </location>
</feature>
<comment type="catalytic activity">
    <reaction evidence="1">
        <text>(4aS,6R)-4a-hydroxy-L-erythro-5,6,7,8-tetrahydrobiopterin = (6R)-L-erythro-6,7-dihydrobiopterin + H2O</text>
        <dbReference type="Rhea" id="RHEA:11920"/>
        <dbReference type="ChEBI" id="CHEBI:15377"/>
        <dbReference type="ChEBI" id="CHEBI:15642"/>
        <dbReference type="ChEBI" id="CHEBI:43120"/>
        <dbReference type="EC" id="4.2.1.96"/>
    </reaction>
</comment>
<comment type="similarity">
    <text evidence="1">Belongs to the pterin-4-alpha-carbinolamine dehydratase family.</text>
</comment>
<proteinExistence type="inferred from homology"/>
<name>PHS_RHOPB</name>
<organism>
    <name type="scientific">Rhodopseudomonas palustris (strain BisB18)</name>
    <dbReference type="NCBI Taxonomy" id="316056"/>
    <lineage>
        <taxon>Bacteria</taxon>
        <taxon>Pseudomonadati</taxon>
        <taxon>Pseudomonadota</taxon>
        <taxon>Alphaproteobacteria</taxon>
        <taxon>Hyphomicrobiales</taxon>
        <taxon>Nitrobacteraceae</taxon>
        <taxon>Rhodopseudomonas</taxon>
    </lineage>
</organism>
<gene>
    <name type="ordered locus">RPC_2524</name>
</gene>
<reference key="1">
    <citation type="submission" date="2006-03" db="EMBL/GenBank/DDBJ databases">
        <title>Complete sequence of Rhodopseudomonas palustris BisB18.</title>
        <authorList>
            <consortium name="US DOE Joint Genome Institute"/>
            <person name="Copeland A."/>
            <person name="Lucas S."/>
            <person name="Lapidus A."/>
            <person name="Barry K."/>
            <person name="Detter J.C."/>
            <person name="Glavina del Rio T."/>
            <person name="Hammon N."/>
            <person name="Israni S."/>
            <person name="Dalin E."/>
            <person name="Tice H."/>
            <person name="Pitluck S."/>
            <person name="Chain P."/>
            <person name="Malfatti S."/>
            <person name="Shin M."/>
            <person name="Vergez L."/>
            <person name="Schmutz J."/>
            <person name="Larimer F."/>
            <person name="Land M."/>
            <person name="Hauser L."/>
            <person name="Pelletier D.A."/>
            <person name="Kyrpides N."/>
            <person name="Anderson I."/>
            <person name="Oda Y."/>
            <person name="Harwood C.S."/>
            <person name="Richardson P."/>
        </authorList>
    </citation>
    <scope>NUCLEOTIDE SEQUENCE [LARGE SCALE GENOMIC DNA]</scope>
    <source>
        <strain>BisB18</strain>
    </source>
</reference>
<accession>Q214W1</accession>
<sequence>MVKRLTDEDRHAALRELPGWSAAEGREAIARTFVFKDFNEAFGFMARVALIAEKHDHHPEWRNVYKTVEVVLTTHDAGGVTARDIDLARAMNAIAAQLSPR</sequence>
<evidence type="ECO:0000255" key="1">
    <source>
        <dbReference type="HAMAP-Rule" id="MF_00434"/>
    </source>
</evidence>
<keyword id="KW-0456">Lyase</keyword>
<protein>
    <recommendedName>
        <fullName evidence="1">Putative pterin-4-alpha-carbinolamine dehydratase</fullName>
        <shortName evidence="1">PHS</shortName>
        <ecNumber evidence="1">4.2.1.96</ecNumber>
    </recommendedName>
    <alternativeName>
        <fullName evidence="1">4-alpha-hydroxy-tetrahydropterin dehydratase</fullName>
    </alternativeName>
    <alternativeName>
        <fullName evidence="1">Pterin carbinolamine dehydratase</fullName>
        <shortName evidence="1">PCD</shortName>
    </alternativeName>
</protein>